<name>HGPRT_MYCTO</name>
<protein>
    <recommendedName>
        <fullName>Hypoxanthine-guanine phosphoribosyltransferase</fullName>
        <shortName>HGPRT</shortName>
        <shortName>HGPRTase</shortName>
        <ecNumber evidence="2">2.4.2.8</ecNumber>
    </recommendedName>
</protein>
<proteinExistence type="inferred from homology"/>
<feature type="chain" id="PRO_0000428140" description="Hypoxanthine-guanine phosphoribosyltransferase">
    <location>
        <begin position="1"/>
        <end position="202"/>
    </location>
</feature>
<feature type="active site" description="Proton acceptor" evidence="1">
    <location>
        <position position="126"/>
    </location>
</feature>
<feature type="binding site" evidence="2">
    <location>
        <position position="66"/>
    </location>
    <ligand>
        <name>diphosphate</name>
        <dbReference type="ChEBI" id="CHEBI:33019"/>
    </ligand>
</feature>
<feature type="binding site" evidence="2">
    <location>
        <position position="67"/>
    </location>
    <ligand>
        <name>diphosphate</name>
        <dbReference type="ChEBI" id="CHEBI:33019"/>
    </ligand>
</feature>
<feature type="binding site" evidence="2">
    <location>
        <position position="122"/>
    </location>
    <ligand>
        <name>Mg(2+)</name>
        <dbReference type="ChEBI" id="CHEBI:18420"/>
    </ligand>
</feature>
<feature type="binding site" evidence="2">
    <location>
        <position position="123"/>
    </location>
    <ligand>
        <name>Mg(2+)</name>
        <dbReference type="ChEBI" id="CHEBI:18420"/>
    </ligand>
</feature>
<feature type="binding site" evidence="2">
    <location>
        <position position="154"/>
    </location>
    <ligand>
        <name>GMP</name>
        <dbReference type="ChEBI" id="CHEBI:58115"/>
    </ligand>
</feature>
<feature type="binding site" evidence="2">
    <location>
        <begin position="175"/>
        <end position="176"/>
    </location>
    <ligand>
        <name>GMP</name>
        <dbReference type="ChEBI" id="CHEBI:58115"/>
    </ligand>
</feature>
<feature type="binding site" evidence="2">
    <location>
        <position position="182"/>
    </location>
    <ligand>
        <name>GMP</name>
        <dbReference type="ChEBI" id="CHEBI:58115"/>
    </ligand>
</feature>
<feature type="binding site" evidence="2">
    <location>
        <position position="188"/>
    </location>
    <ligand>
        <name>diphosphate</name>
        <dbReference type="ChEBI" id="CHEBI:33019"/>
    </ligand>
</feature>
<gene>
    <name type="primary">hpt</name>
    <name type="synonym">hprT</name>
    <name type="ordered locus">MT3726</name>
</gene>
<comment type="function">
    <text evidence="2">Purine salvage pathway enzyme that catalyzes the transfer of the ribosyl-5-phosphate group from 5-phospho-alpha-D-ribose 1-diphosphate (PRPP) to the N9 position of the 6-oxopurines hypoxanthine and guanine to form the corresponding ribonucleotides IMP (inosine 5'-monophosphate) and GMP (guanosine 5'-monophosphate), with the release of PPi.</text>
</comment>
<comment type="catalytic activity">
    <reaction evidence="2">
        <text>IMP + diphosphate = hypoxanthine + 5-phospho-alpha-D-ribose 1-diphosphate</text>
        <dbReference type="Rhea" id="RHEA:17973"/>
        <dbReference type="ChEBI" id="CHEBI:17368"/>
        <dbReference type="ChEBI" id="CHEBI:33019"/>
        <dbReference type="ChEBI" id="CHEBI:58017"/>
        <dbReference type="ChEBI" id="CHEBI:58053"/>
        <dbReference type="EC" id="2.4.2.8"/>
    </reaction>
    <physiologicalReaction direction="right-to-left" evidence="2">
        <dbReference type="Rhea" id="RHEA:17975"/>
    </physiologicalReaction>
</comment>
<comment type="catalytic activity">
    <reaction evidence="2">
        <text>GMP + diphosphate = guanine + 5-phospho-alpha-D-ribose 1-diphosphate</text>
        <dbReference type="Rhea" id="RHEA:25424"/>
        <dbReference type="ChEBI" id="CHEBI:16235"/>
        <dbReference type="ChEBI" id="CHEBI:33019"/>
        <dbReference type="ChEBI" id="CHEBI:58017"/>
        <dbReference type="ChEBI" id="CHEBI:58115"/>
        <dbReference type="EC" id="2.4.2.8"/>
    </reaction>
    <physiologicalReaction direction="right-to-left" evidence="2">
        <dbReference type="Rhea" id="RHEA:25426"/>
    </physiologicalReaction>
</comment>
<comment type="cofactor">
    <cofactor evidence="2">
        <name>Mg(2+)</name>
        <dbReference type="ChEBI" id="CHEBI:18420"/>
    </cofactor>
</comment>
<comment type="pathway">
    <text evidence="2">Purine metabolism; IMP biosynthesis via salvage pathway; IMP from hypoxanthine: step 1/1.</text>
</comment>
<comment type="pathway">
    <text evidence="2">Purine metabolism; GMP biosynthesis via salvage pathway; GMP from guanine: step 1/1.</text>
</comment>
<comment type="subcellular location">
    <subcellularLocation>
        <location evidence="3">Cytoplasm</location>
    </subcellularLocation>
</comment>
<comment type="similarity">
    <text evidence="3">Belongs to the purine/pyrimidine phosphoribosyltransferase family.</text>
</comment>
<evidence type="ECO:0000250" key="1">
    <source>
        <dbReference type="UniProtKB" id="P0A9M2"/>
    </source>
</evidence>
<evidence type="ECO:0000250" key="2">
    <source>
        <dbReference type="UniProtKB" id="P9WHQ9"/>
    </source>
</evidence>
<evidence type="ECO:0000305" key="3"/>
<organism>
    <name type="scientific">Mycobacterium tuberculosis (strain CDC 1551 / Oshkosh)</name>
    <dbReference type="NCBI Taxonomy" id="83331"/>
    <lineage>
        <taxon>Bacteria</taxon>
        <taxon>Bacillati</taxon>
        <taxon>Actinomycetota</taxon>
        <taxon>Actinomycetes</taxon>
        <taxon>Mycobacteriales</taxon>
        <taxon>Mycobacteriaceae</taxon>
        <taxon>Mycobacterium</taxon>
        <taxon>Mycobacterium tuberculosis complex</taxon>
    </lineage>
</organism>
<dbReference type="EC" id="2.4.2.8" evidence="2"/>
<dbReference type="EMBL" id="AE000516">
    <property type="protein sequence ID" value="AAK48087.1"/>
    <property type="molecule type" value="Genomic_DNA"/>
</dbReference>
<dbReference type="PIR" id="A70561">
    <property type="entry name" value="A70561"/>
</dbReference>
<dbReference type="SMR" id="P9WHQ8"/>
<dbReference type="KEGG" id="mtc:MT3726"/>
<dbReference type="HOGENOM" id="CLU_073615_0_0_11"/>
<dbReference type="UniPathway" id="UPA00591">
    <property type="reaction ID" value="UER00648"/>
</dbReference>
<dbReference type="UniPathway" id="UPA00909">
    <property type="reaction ID" value="UER00887"/>
</dbReference>
<dbReference type="Proteomes" id="UP000001020">
    <property type="component" value="Chromosome"/>
</dbReference>
<dbReference type="GO" id="GO:0005829">
    <property type="term" value="C:cytosol"/>
    <property type="evidence" value="ECO:0007669"/>
    <property type="project" value="TreeGrafter"/>
</dbReference>
<dbReference type="GO" id="GO:0052657">
    <property type="term" value="F:guanine phosphoribosyltransferase activity"/>
    <property type="evidence" value="ECO:0007669"/>
    <property type="project" value="RHEA"/>
</dbReference>
<dbReference type="GO" id="GO:0004422">
    <property type="term" value="F:hypoxanthine phosphoribosyltransferase activity"/>
    <property type="evidence" value="ECO:0007669"/>
    <property type="project" value="InterPro"/>
</dbReference>
<dbReference type="GO" id="GO:0000287">
    <property type="term" value="F:magnesium ion binding"/>
    <property type="evidence" value="ECO:0007669"/>
    <property type="project" value="TreeGrafter"/>
</dbReference>
<dbReference type="GO" id="GO:0000166">
    <property type="term" value="F:nucleotide binding"/>
    <property type="evidence" value="ECO:0007669"/>
    <property type="project" value="UniProtKB-KW"/>
</dbReference>
<dbReference type="GO" id="GO:0032263">
    <property type="term" value="P:GMP salvage"/>
    <property type="evidence" value="ECO:0007669"/>
    <property type="project" value="UniProtKB-UniPathway"/>
</dbReference>
<dbReference type="GO" id="GO:0006178">
    <property type="term" value="P:guanine salvage"/>
    <property type="evidence" value="ECO:0007669"/>
    <property type="project" value="TreeGrafter"/>
</dbReference>
<dbReference type="GO" id="GO:0046100">
    <property type="term" value="P:hypoxanthine metabolic process"/>
    <property type="evidence" value="ECO:0007669"/>
    <property type="project" value="TreeGrafter"/>
</dbReference>
<dbReference type="GO" id="GO:0032264">
    <property type="term" value="P:IMP salvage"/>
    <property type="evidence" value="ECO:0007669"/>
    <property type="project" value="UniProtKB-UniPathway"/>
</dbReference>
<dbReference type="GO" id="GO:0006166">
    <property type="term" value="P:purine ribonucleoside salvage"/>
    <property type="evidence" value="ECO:0007669"/>
    <property type="project" value="UniProtKB-KW"/>
</dbReference>
<dbReference type="CDD" id="cd06223">
    <property type="entry name" value="PRTases_typeI"/>
    <property type="match status" value="1"/>
</dbReference>
<dbReference type="FunFam" id="3.40.50.2020:FF:000006">
    <property type="entry name" value="Hypoxanthine phosphoribosyltransferase"/>
    <property type="match status" value="1"/>
</dbReference>
<dbReference type="Gene3D" id="3.40.50.2020">
    <property type="match status" value="1"/>
</dbReference>
<dbReference type="InterPro" id="IPR050408">
    <property type="entry name" value="HGPRT"/>
</dbReference>
<dbReference type="InterPro" id="IPR005904">
    <property type="entry name" value="Hxn_phspho_trans"/>
</dbReference>
<dbReference type="InterPro" id="IPR000836">
    <property type="entry name" value="PRibTrfase_dom"/>
</dbReference>
<dbReference type="InterPro" id="IPR029057">
    <property type="entry name" value="PRTase-like"/>
</dbReference>
<dbReference type="NCBIfam" id="TIGR01203">
    <property type="entry name" value="HGPRTase"/>
    <property type="match status" value="1"/>
</dbReference>
<dbReference type="PANTHER" id="PTHR43340:SF1">
    <property type="entry name" value="HYPOXANTHINE PHOSPHORIBOSYLTRANSFERASE"/>
    <property type="match status" value="1"/>
</dbReference>
<dbReference type="PANTHER" id="PTHR43340">
    <property type="entry name" value="HYPOXANTHINE-GUANINE PHOSPHORIBOSYLTRANSFERASE"/>
    <property type="match status" value="1"/>
</dbReference>
<dbReference type="Pfam" id="PF00156">
    <property type="entry name" value="Pribosyltran"/>
    <property type="match status" value="1"/>
</dbReference>
<dbReference type="SUPFAM" id="SSF53271">
    <property type="entry name" value="PRTase-like"/>
    <property type="match status" value="1"/>
</dbReference>
<dbReference type="PROSITE" id="PS00103">
    <property type="entry name" value="PUR_PYR_PR_TRANSFER"/>
    <property type="match status" value="1"/>
</dbReference>
<keyword id="KW-0963">Cytoplasm</keyword>
<keyword id="KW-0328">Glycosyltransferase</keyword>
<keyword id="KW-0460">Magnesium</keyword>
<keyword id="KW-0479">Metal-binding</keyword>
<keyword id="KW-0547">Nucleotide-binding</keyword>
<keyword id="KW-0660">Purine salvage</keyword>
<keyword id="KW-1185">Reference proteome</keyword>
<keyword id="KW-0808">Transferase</keyword>
<sequence length="202" mass="22269">MHVTQSSSAITPGQTAELYPGDIKSVLLTAEQIQARIAELGEQIGNDYRELSATTGQDLLMITVLKGAVLFVTDLARAIPVPTQFEFMAVSSYGSSTSSSGVVRILKDLDRDIHGRDVLIVEDVVDSGLTLSWLSRNLTSRNPRSLRVCTLLRKPDAVHANVEIAYVGFDIPNDFVVGYGLDYDERYRDLSYIGTLDPRVYQ</sequence>
<accession>P9WHQ8</accession>
<accession>L0TER1</accession>
<accession>O06383</accession>
<accession>P0A5T0</accession>
<accession>P96906</accession>
<reference key="1">
    <citation type="journal article" date="2002" name="J. Bacteriol.">
        <title>Whole-genome comparison of Mycobacterium tuberculosis clinical and laboratory strains.</title>
        <authorList>
            <person name="Fleischmann R.D."/>
            <person name="Alland D."/>
            <person name="Eisen J.A."/>
            <person name="Carpenter L."/>
            <person name="White O."/>
            <person name="Peterson J.D."/>
            <person name="DeBoy R.T."/>
            <person name="Dodson R.J."/>
            <person name="Gwinn M.L."/>
            <person name="Haft D.H."/>
            <person name="Hickey E.K."/>
            <person name="Kolonay J.F."/>
            <person name="Nelson W.C."/>
            <person name="Umayam L.A."/>
            <person name="Ermolaeva M.D."/>
            <person name="Salzberg S.L."/>
            <person name="Delcher A."/>
            <person name="Utterback T.R."/>
            <person name="Weidman J.F."/>
            <person name="Khouri H.M."/>
            <person name="Gill J."/>
            <person name="Mikula A."/>
            <person name="Bishai W."/>
            <person name="Jacobs W.R. Jr."/>
            <person name="Venter J.C."/>
            <person name="Fraser C.M."/>
        </authorList>
    </citation>
    <scope>NUCLEOTIDE SEQUENCE [LARGE SCALE GENOMIC DNA]</scope>
    <source>
        <strain>CDC 1551 / Oshkosh</strain>
    </source>
</reference>